<organism>
    <name type="scientific">Escherichia coli O157:H7 (strain EC4115 / EHEC)</name>
    <dbReference type="NCBI Taxonomy" id="444450"/>
    <lineage>
        <taxon>Bacteria</taxon>
        <taxon>Pseudomonadati</taxon>
        <taxon>Pseudomonadota</taxon>
        <taxon>Gammaproteobacteria</taxon>
        <taxon>Enterobacterales</taxon>
        <taxon>Enterobacteriaceae</taxon>
        <taxon>Escherichia</taxon>
    </lineage>
</organism>
<evidence type="ECO:0000255" key="1">
    <source>
        <dbReference type="HAMAP-Rule" id="MF_01554"/>
    </source>
</evidence>
<dbReference type="EC" id="5.4.2.10" evidence="1"/>
<dbReference type="EMBL" id="CP001164">
    <property type="protein sequence ID" value="ACI38909.1"/>
    <property type="molecule type" value="Genomic_DNA"/>
</dbReference>
<dbReference type="RefSeq" id="WP_000071140.1">
    <property type="nucleotide sequence ID" value="NC_011353.1"/>
</dbReference>
<dbReference type="SMR" id="B5YS65"/>
<dbReference type="KEGG" id="ecf:ECH74115_4498"/>
<dbReference type="HOGENOM" id="CLU_016950_7_0_6"/>
<dbReference type="GO" id="GO:0005829">
    <property type="term" value="C:cytosol"/>
    <property type="evidence" value="ECO:0007669"/>
    <property type="project" value="TreeGrafter"/>
</dbReference>
<dbReference type="GO" id="GO:0000287">
    <property type="term" value="F:magnesium ion binding"/>
    <property type="evidence" value="ECO:0007669"/>
    <property type="project" value="UniProtKB-UniRule"/>
</dbReference>
<dbReference type="GO" id="GO:0008966">
    <property type="term" value="F:phosphoglucosamine mutase activity"/>
    <property type="evidence" value="ECO:0007669"/>
    <property type="project" value="UniProtKB-UniRule"/>
</dbReference>
<dbReference type="GO" id="GO:0004615">
    <property type="term" value="F:phosphomannomutase activity"/>
    <property type="evidence" value="ECO:0007669"/>
    <property type="project" value="TreeGrafter"/>
</dbReference>
<dbReference type="GO" id="GO:0005975">
    <property type="term" value="P:carbohydrate metabolic process"/>
    <property type="evidence" value="ECO:0007669"/>
    <property type="project" value="InterPro"/>
</dbReference>
<dbReference type="GO" id="GO:0009252">
    <property type="term" value="P:peptidoglycan biosynthetic process"/>
    <property type="evidence" value="ECO:0007669"/>
    <property type="project" value="TreeGrafter"/>
</dbReference>
<dbReference type="GO" id="GO:0006048">
    <property type="term" value="P:UDP-N-acetylglucosamine biosynthetic process"/>
    <property type="evidence" value="ECO:0007669"/>
    <property type="project" value="TreeGrafter"/>
</dbReference>
<dbReference type="CDD" id="cd05802">
    <property type="entry name" value="GlmM"/>
    <property type="match status" value="1"/>
</dbReference>
<dbReference type="FunFam" id="3.30.310.50:FF:000001">
    <property type="entry name" value="Phosphoglucosamine mutase"/>
    <property type="match status" value="1"/>
</dbReference>
<dbReference type="FunFam" id="3.40.120.10:FF:000001">
    <property type="entry name" value="Phosphoglucosamine mutase"/>
    <property type="match status" value="1"/>
</dbReference>
<dbReference type="FunFam" id="3.40.120.10:FF:000002">
    <property type="entry name" value="Phosphoglucosamine mutase"/>
    <property type="match status" value="1"/>
</dbReference>
<dbReference type="Gene3D" id="3.40.120.10">
    <property type="entry name" value="Alpha-D-Glucose-1,6-Bisphosphate, subunit A, domain 3"/>
    <property type="match status" value="3"/>
</dbReference>
<dbReference type="Gene3D" id="3.30.310.50">
    <property type="entry name" value="Alpha-D-phosphohexomutase, C-terminal domain"/>
    <property type="match status" value="1"/>
</dbReference>
<dbReference type="HAMAP" id="MF_01554_B">
    <property type="entry name" value="GlmM_B"/>
    <property type="match status" value="1"/>
</dbReference>
<dbReference type="InterPro" id="IPR005844">
    <property type="entry name" value="A-D-PHexomutase_a/b/a-I"/>
</dbReference>
<dbReference type="InterPro" id="IPR016055">
    <property type="entry name" value="A-D-PHexomutase_a/b/a-I/II/III"/>
</dbReference>
<dbReference type="InterPro" id="IPR005845">
    <property type="entry name" value="A-D-PHexomutase_a/b/a-II"/>
</dbReference>
<dbReference type="InterPro" id="IPR005846">
    <property type="entry name" value="A-D-PHexomutase_a/b/a-III"/>
</dbReference>
<dbReference type="InterPro" id="IPR005843">
    <property type="entry name" value="A-D-PHexomutase_C"/>
</dbReference>
<dbReference type="InterPro" id="IPR036900">
    <property type="entry name" value="A-D-PHexomutase_C_sf"/>
</dbReference>
<dbReference type="InterPro" id="IPR016066">
    <property type="entry name" value="A-D-PHexomutase_CS"/>
</dbReference>
<dbReference type="InterPro" id="IPR005841">
    <property type="entry name" value="Alpha-D-phosphohexomutase_SF"/>
</dbReference>
<dbReference type="InterPro" id="IPR006352">
    <property type="entry name" value="GlmM_bact"/>
</dbReference>
<dbReference type="InterPro" id="IPR050060">
    <property type="entry name" value="Phosphoglucosamine_mutase"/>
</dbReference>
<dbReference type="NCBIfam" id="TIGR01455">
    <property type="entry name" value="glmM"/>
    <property type="match status" value="1"/>
</dbReference>
<dbReference type="NCBIfam" id="NF008139">
    <property type="entry name" value="PRK10887.1"/>
    <property type="match status" value="1"/>
</dbReference>
<dbReference type="PANTHER" id="PTHR42946:SF1">
    <property type="entry name" value="PHOSPHOGLUCOMUTASE (ALPHA-D-GLUCOSE-1,6-BISPHOSPHATE-DEPENDENT)"/>
    <property type="match status" value="1"/>
</dbReference>
<dbReference type="PANTHER" id="PTHR42946">
    <property type="entry name" value="PHOSPHOHEXOSE MUTASE"/>
    <property type="match status" value="1"/>
</dbReference>
<dbReference type="Pfam" id="PF02878">
    <property type="entry name" value="PGM_PMM_I"/>
    <property type="match status" value="1"/>
</dbReference>
<dbReference type="Pfam" id="PF02879">
    <property type="entry name" value="PGM_PMM_II"/>
    <property type="match status" value="1"/>
</dbReference>
<dbReference type="Pfam" id="PF02880">
    <property type="entry name" value="PGM_PMM_III"/>
    <property type="match status" value="1"/>
</dbReference>
<dbReference type="Pfam" id="PF00408">
    <property type="entry name" value="PGM_PMM_IV"/>
    <property type="match status" value="1"/>
</dbReference>
<dbReference type="PRINTS" id="PR00509">
    <property type="entry name" value="PGMPMM"/>
</dbReference>
<dbReference type="SUPFAM" id="SSF55957">
    <property type="entry name" value="Phosphoglucomutase, C-terminal domain"/>
    <property type="match status" value="1"/>
</dbReference>
<dbReference type="SUPFAM" id="SSF53738">
    <property type="entry name" value="Phosphoglucomutase, first 3 domains"/>
    <property type="match status" value="3"/>
</dbReference>
<dbReference type="PROSITE" id="PS00710">
    <property type="entry name" value="PGM_PMM"/>
    <property type="match status" value="1"/>
</dbReference>
<name>GLMM_ECO5E</name>
<feature type="chain" id="PRO_1000201093" description="Phosphoglucosamine mutase">
    <location>
        <begin position="1"/>
        <end position="445"/>
    </location>
</feature>
<feature type="active site" description="Phosphoserine intermediate" evidence="1">
    <location>
        <position position="102"/>
    </location>
</feature>
<feature type="binding site" description="via phosphate group" evidence="1">
    <location>
        <position position="102"/>
    </location>
    <ligand>
        <name>Mg(2+)</name>
        <dbReference type="ChEBI" id="CHEBI:18420"/>
    </ligand>
</feature>
<feature type="binding site" evidence="1">
    <location>
        <position position="241"/>
    </location>
    <ligand>
        <name>Mg(2+)</name>
        <dbReference type="ChEBI" id="CHEBI:18420"/>
    </ligand>
</feature>
<feature type="binding site" evidence="1">
    <location>
        <position position="243"/>
    </location>
    <ligand>
        <name>Mg(2+)</name>
        <dbReference type="ChEBI" id="CHEBI:18420"/>
    </ligand>
</feature>
<feature type="binding site" evidence="1">
    <location>
        <position position="245"/>
    </location>
    <ligand>
        <name>Mg(2+)</name>
        <dbReference type="ChEBI" id="CHEBI:18420"/>
    </ligand>
</feature>
<feature type="modified residue" description="Phosphoserine" evidence="1">
    <location>
        <position position="102"/>
    </location>
</feature>
<sequence length="445" mass="47547">MSNRKYFGTDGIRGRVGDAPITPDFVLKLGWAAGKVLARHGSRKIIIGKDTRISGYMLESALEAGLAAAGLSALFTGPMPTPAVAYLTRTFRAEAGIVISASHNPFYDNGIKFFSIDGTKLPDAVEEAIEAEMEKEISCVDSAELGKASRIVDAAGRYIEFCKATFPNELSLSELKIVVDCANGATYHIAPNVLRELGANVIAIGCEPNGVNINAEVGATDVRALQARVLAEKADLGIAFDGDGDRVIMVDHEGNKVDGDQIMYIIAREGLRQGQLRGGAVGTLMSNMGLELALKQLGIPFARAKVGDRYVLEKMQEKGWRIGAENSGHVILLDKTTTGDGIVAGLQVLAAMARNHMSLHDLCSGMKMFPQILVNVRYTAGSGDPLEHESVKAVTAEVETALGSRGRVLLRKSGTEPLIRVMVEGEDEAQVTEFAHRIADAVKAV</sequence>
<reference key="1">
    <citation type="journal article" date="2011" name="Proc. Natl. Acad. Sci. U.S.A.">
        <title>Genomic anatomy of Escherichia coli O157:H7 outbreaks.</title>
        <authorList>
            <person name="Eppinger M."/>
            <person name="Mammel M.K."/>
            <person name="Leclerc J.E."/>
            <person name="Ravel J."/>
            <person name="Cebula T.A."/>
        </authorList>
    </citation>
    <scope>NUCLEOTIDE SEQUENCE [LARGE SCALE GENOMIC DNA]</scope>
    <source>
        <strain>EC4115 / EHEC</strain>
    </source>
</reference>
<keyword id="KW-0413">Isomerase</keyword>
<keyword id="KW-0460">Magnesium</keyword>
<keyword id="KW-0479">Metal-binding</keyword>
<keyword id="KW-0597">Phosphoprotein</keyword>
<protein>
    <recommendedName>
        <fullName evidence="1">Phosphoglucosamine mutase</fullName>
        <ecNumber evidence="1">5.4.2.10</ecNumber>
    </recommendedName>
</protein>
<proteinExistence type="inferred from homology"/>
<gene>
    <name evidence="1" type="primary">glmM</name>
    <name type="ordered locus">ECH74115_4498</name>
</gene>
<comment type="function">
    <text evidence="1">Catalyzes the conversion of glucosamine-6-phosphate to glucosamine-1-phosphate.</text>
</comment>
<comment type="catalytic activity">
    <reaction evidence="1">
        <text>alpha-D-glucosamine 1-phosphate = D-glucosamine 6-phosphate</text>
        <dbReference type="Rhea" id="RHEA:23424"/>
        <dbReference type="ChEBI" id="CHEBI:58516"/>
        <dbReference type="ChEBI" id="CHEBI:58725"/>
        <dbReference type="EC" id="5.4.2.10"/>
    </reaction>
</comment>
<comment type="cofactor">
    <cofactor evidence="1">
        <name>Mg(2+)</name>
        <dbReference type="ChEBI" id="CHEBI:18420"/>
    </cofactor>
    <text evidence="1">Binds 1 Mg(2+) ion per subunit.</text>
</comment>
<comment type="PTM">
    <text evidence="1">Activated by phosphorylation.</text>
</comment>
<comment type="similarity">
    <text evidence="1">Belongs to the phosphohexose mutase family.</text>
</comment>
<accession>B5YS65</accession>